<keyword id="KW-0025">Alternative splicing</keyword>
<keyword id="KW-0472">Membrane</keyword>
<keyword id="KW-0496">Mitochondrion</keyword>
<keyword id="KW-0999">Mitochondrion inner membrane</keyword>
<keyword id="KW-1267">Proteomics identification</keyword>
<keyword id="KW-1185">Reference proteome</keyword>
<keyword id="KW-0812">Transmembrane</keyword>
<keyword id="KW-1133">Transmembrane helix</keyword>
<sequence>MGSRLSQPFESYITAPPGTAAAPAKPAPPATPGAPTSPAEHRLLKTCWSCRVLSGLGLMGAGGYVYWVARKPMKMGYPPSPWTITQMVIGLSENQGIATWGIVVMADPKGKAYRVV</sequence>
<feature type="chain" id="PRO_0000089729" description="Distal membrane-arm assembly complex protein 1">
    <location>
        <begin position="1"/>
        <end position="116"/>
    </location>
</feature>
<feature type="transmembrane region" description="Helical" evidence="1">
    <location>
        <begin position="52"/>
        <end position="69"/>
    </location>
</feature>
<feature type="transmembrane region" description="Helical" evidence="1">
    <location>
        <begin position="82"/>
        <end position="104"/>
    </location>
</feature>
<feature type="region of interest" description="Disordered" evidence="2">
    <location>
        <begin position="1"/>
        <end position="39"/>
    </location>
</feature>
<feature type="compositionally biased region" description="Low complexity" evidence="2">
    <location>
        <begin position="14"/>
        <end position="24"/>
    </location>
</feature>
<feature type="splice variant" id="VSP_014455" description="In isoform 2." evidence="4 5">
    <location>
        <begin position="93"/>
        <end position="96"/>
    </location>
</feature>
<feature type="sequence variant" id="VAR_056819" description="In dbSNP:rs1127430.">
    <original>P</original>
    <variation>T</variation>
    <location>
        <position position="28"/>
    </location>
</feature>
<proteinExistence type="evidence at protein level"/>
<name>DMAC1_HUMAN</name>
<organism>
    <name type="scientific">Homo sapiens</name>
    <name type="common">Human</name>
    <dbReference type="NCBI Taxonomy" id="9606"/>
    <lineage>
        <taxon>Eukaryota</taxon>
        <taxon>Metazoa</taxon>
        <taxon>Chordata</taxon>
        <taxon>Craniata</taxon>
        <taxon>Vertebrata</taxon>
        <taxon>Euteleostomi</taxon>
        <taxon>Mammalia</taxon>
        <taxon>Eutheria</taxon>
        <taxon>Euarchontoglires</taxon>
        <taxon>Primates</taxon>
        <taxon>Haplorrhini</taxon>
        <taxon>Catarrhini</taxon>
        <taxon>Hominidae</taxon>
        <taxon>Homo</taxon>
    </lineage>
</organism>
<reference key="1">
    <citation type="journal article" date="2004" name="Nat. Genet.">
        <title>Complete sequencing and characterization of 21,243 full-length human cDNAs.</title>
        <authorList>
            <person name="Ota T."/>
            <person name="Suzuki Y."/>
            <person name="Nishikawa T."/>
            <person name="Otsuki T."/>
            <person name="Sugiyama T."/>
            <person name="Irie R."/>
            <person name="Wakamatsu A."/>
            <person name="Hayashi K."/>
            <person name="Sato H."/>
            <person name="Nagai K."/>
            <person name="Kimura K."/>
            <person name="Makita H."/>
            <person name="Sekine M."/>
            <person name="Obayashi M."/>
            <person name="Nishi T."/>
            <person name="Shibahara T."/>
            <person name="Tanaka T."/>
            <person name="Ishii S."/>
            <person name="Yamamoto J."/>
            <person name="Saito K."/>
            <person name="Kawai Y."/>
            <person name="Isono Y."/>
            <person name="Nakamura Y."/>
            <person name="Nagahari K."/>
            <person name="Murakami K."/>
            <person name="Yasuda T."/>
            <person name="Iwayanagi T."/>
            <person name="Wagatsuma M."/>
            <person name="Shiratori A."/>
            <person name="Sudo H."/>
            <person name="Hosoiri T."/>
            <person name="Kaku Y."/>
            <person name="Kodaira H."/>
            <person name="Kondo H."/>
            <person name="Sugawara M."/>
            <person name="Takahashi M."/>
            <person name="Kanda K."/>
            <person name="Yokoi T."/>
            <person name="Furuya T."/>
            <person name="Kikkawa E."/>
            <person name="Omura Y."/>
            <person name="Abe K."/>
            <person name="Kamihara K."/>
            <person name="Katsuta N."/>
            <person name="Sato K."/>
            <person name="Tanikawa M."/>
            <person name="Yamazaki M."/>
            <person name="Ninomiya K."/>
            <person name="Ishibashi T."/>
            <person name="Yamashita H."/>
            <person name="Murakawa K."/>
            <person name="Fujimori K."/>
            <person name="Tanai H."/>
            <person name="Kimata M."/>
            <person name="Watanabe M."/>
            <person name="Hiraoka S."/>
            <person name="Chiba Y."/>
            <person name="Ishida S."/>
            <person name="Ono Y."/>
            <person name="Takiguchi S."/>
            <person name="Watanabe S."/>
            <person name="Yosida M."/>
            <person name="Hotuta T."/>
            <person name="Kusano J."/>
            <person name="Kanehori K."/>
            <person name="Takahashi-Fujii A."/>
            <person name="Hara H."/>
            <person name="Tanase T.-O."/>
            <person name="Nomura Y."/>
            <person name="Togiya S."/>
            <person name="Komai F."/>
            <person name="Hara R."/>
            <person name="Takeuchi K."/>
            <person name="Arita M."/>
            <person name="Imose N."/>
            <person name="Musashino K."/>
            <person name="Yuuki H."/>
            <person name="Oshima A."/>
            <person name="Sasaki N."/>
            <person name="Aotsuka S."/>
            <person name="Yoshikawa Y."/>
            <person name="Matsunawa H."/>
            <person name="Ichihara T."/>
            <person name="Shiohata N."/>
            <person name="Sano S."/>
            <person name="Moriya S."/>
            <person name="Momiyama H."/>
            <person name="Satoh N."/>
            <person name="Takami S."/>
            <person name="Terashima Y."/>
            <person name="Suzuki O."/>
            <person name="Nakagawa S."/>
            <person name="Senoh A."/>
            <person name="Mizoguchi H."/>
            <person name="Goto Y."/>
            <person name="Shimizu F."/>
            <person name="Wakebe H."/>
            <person name="Hishigaki H."/>
            <person name="Watanabe T."/>
            <person name="Sugiyama A."/>
            <person name="Takemoto M."/>
            <person name="Kawakami B."/>
            <person name="Yamazaki M."/>
            <person name="Watanabe K."/>
            <person name="Kumagai A."/>
            <person name="Itakura S."/>
            <person name="Fukuzumi Y."/>
            <person name="Fujimori Y."/>
            <person name="Komiyama M."/>
            <person name="Tashiro H."/>
            <person name="Tanigami A."/>
            <person name="Fujiwara T."/>
            <person name="Ono T."/>
            <person name="Yamada K."/>
            <person name="Fujii Y."/>
            <person name="Ozaki K."/>
            <person name="Hirao M."/>
            <person name="Ohmori Y."/>
            <person name="Kawabata A."/>
            <person name="Hikiji T."/>
            <person name="Kobatake N."/>
            <person name="Inagaki H."/>
            <person name="Ikema Y."/>
            <person name="Okamoto S."/>
            <person name="Okitani R."/>
            <person name="Kawakami T."/>
            <person name="Noguchi S."/>
            <person name="Itoh T."/>
            <person name="Shigeta K."/>
            <person name="Senba T."/>
            <person name="Matsumura K."/>
            <person name="Nakajima Y."/>
            <person name="Mizuno T."/>
            <person name="Morinaga M."/>
            <person name="Sasaki M."/>
            <person name="Togashi T."/>
            <person name="Oyama M."/>
            <person name="Hata H."/>
            <person name="Watanabe M."/>
            <person name="Komatsu T."/>
            <person name="Mizushima-Sugano J."/>
            <person name="Satoh T."/>
            <person name="Shirai Y."/>
            <person name="Takahashi Y."/>
            <person name="Nakagawa K."/>
            <person name="Okumura K."/>
            <person name="Nagase T."/>
            <person name="Nomura N."/>
            <person name="Kikuchi H."/>
            <person name="Masuho Y."/>
            <person name="Yamashita R."/>
            <person name="Nakai K."/>
            <person name="Yada T."/>
            <person name="Nakamura Y."/>
            <person name="Ohara O."/>
            <person name="Isogai T."/>
            <person name="Sugano S."/>
        </authorList>
    </citation>
    <scope>NUCLEOTIDE SEQUENCE [LARGE SCALE MRNA] (ISOFORM 2)</scope>
    <source>
        <tissue>Thymus</tissue>
    </source>
</reference>
<reference key="2">
    <citation type="journal article" date="2004" name="Nature">
        <title>DNA sequence and analysis of human chromosome 9.</title>
        <authorList>
            <person name="Humphray S.J."/>
            <person name="Oliver K."/>
            <person name="Hunt A.R."/>
            <person name="Plumb R.W."/>
            <person name="Loveland J.E."/>
            <person name="Howe K.L."/>
            <person name="Andrews T.D."/>
            <person name="Searle S."/>
            <person name="Hunt S.E."/>
            <person name="Scott C.E."/>
            <person name="Jones M.C."/>
            <person name="Ainscough R."/>
            <person name="Almeida J.P."/>
            <person name="Ambrose K.D."/>
            <person name="Ashwell R.I.S."/>
            <person name="Babbage A.K."/>
            <person name="Babbage S."/>
            <person name="Bagguley C.L."/>
            <person name="Bailey J."/>
            <person name="Banerjee R."/>
            <person name="Barker D.J."/>
            <person name="Barlow K.F."/>
            <person name="Bates K."/>
            <person name="Beasley H."/>
            <person name="Beasley O."/>
            <person name="Bird C.P."/>
            <person name="Bray-Allen S."/>
            <person name="Brown A.J."/>
            <person name="Brown J.Y."/>
            <person name="Burford D."/>
            <person name="Burrill W."/>
            <person name="Burton J."/>
            <person name="Carder C."/>
            <person name="Carter N.P."/>
            <person name="Chapman J.C."/>
            <person name="Chen Y."/>
            <person name="Clarke G."/>
            <person name="Clark S.Y."/>
            <person name="Clee C.M."/>
            <person name="Clegg S."/>
            <person name="Collier R.E."/>
            <person name="Corby N."/>
            <person name="Crosier M."/>
            <person name="Cummings A.T."/>
            <person name="Davies J."/>
            <person name="Dhami P."/>
            <person name="Dunn M."/>
            <person name="Dutta I."/>
            <person name="Dyer L.W."/>
            <person name="Earthrowl M.E."/>
            <person name="Faulkner L."/>
            <person name="Fleming C.J."/>
            <person name="Frankish A."/>
            <person name="Frankland J.A."/>
            <person name="French L."/>
            <person name="Fricker D.G."/>
            <person name="Garner P."/>
            <person name="Garnett J."/>
            <person name="Ghori J."/>
            <person name="Gilbert J.G.R."/>
            <person name="Glison C."/>
            <person name="Grafham D.V."/>
            <person name="Gribble S."/>
            <person name="Griffiths C."/>
            <person name="Griffiths-Jones S."/>
            <person name="Grocock R."/>
            <person name="Guy J."/>
            <person name="Hall R.E."/>
            <person name="Hammond S."/>
            <person name="Harley J.L."/>
            <person name="Harrison E.S.I."/>
            <person name="Hart E.A."/>
            <person name="Heath P.D."/>
            <person name="Henderson C.D."/>
            <person name="Hopkins B.L."/>
            <person name="Howard P.J."/>
            <person name="Howden P.J."/>
            <person name="Huckle E."/>
            <person name="Johnson C."/>
            <person name="Johnson D."/>
            <person name="Joy A.A."/>
            <person name="Kay M."/>
            <person name="Keenan S."/>
            <person name="Kershaw J.K."/>
            <person name="Kimberley A.M."/>
            <person name="King A."/>
            <person name="Knights A."/>
            <person name="Laird G.K."/>
            <person name="Langford C."/>
            <person name="Lawlor S."/>
            <person name="Leongamornlert D.A."/>
            <person name="Leversha M."/>
            <person name="Lloyd C."/>
            <person name="Lloyd D.M."/>
            <person name="Lovell J."/>
            <person name="Martin S."/>
            <person name="Mashreghi-Mohammadi M."/>
            <person name="Matthews L."/>
            <person name="McLaren S."/>
            <person name="McLay K.E."/>
            <person name="McMurray A."/>
            <person name="Milne S."/>
            <person name="Nickerson T."/>
            <person name="Nisbett J."/>
            <person name="Nordsiek G."/>
            <person name="Pearce A.V."/>
            <person name="Peck A.I."/>
            <person name="Porter K.M."/>
            <person name="Pandian R."/>
            <person name="Pelan S."/>
            <person name="Phillimore B."/>
            <person name="Povey S."/>
            <person name="Ramsey Y."/>
            <person name="Rand V."/>
            <person name="Scharfe M."/>
            <person name="Sehra H.K."/>
            <person name="Shownkeen R."/>
            <person name="Sims S.K."/>
            <person name="Skuce C.D."/>
            <person name="Smith M."/>
            <person name="Steward C.A."/>
            <person name="Swarbreck D."/>
            <person name="Sycamore N."/>
            <person name="Tester J."/>
            <person name="Thorpe A."/>
            <person name="Tracey A."/>
            <person name="Tromans A."/>
            <person name="Thomas D.W."/>
            <person name="Wall M."/>
            <person name="Wallis J.M."/>
            <person name="West A.P."/>
            <person name="Whitehead S.L."/>
            <person name="Willey D.L."/>
            <person name="Williams S.A."/>
            <person name="Wilming L."/>
            <person name="Wray P.W."/>
            <person name="Young L."/>
            <person name="Ashurst J.L."/>
            <person name="Coulson A."/>
            <person name="Blocker H."/>
            <person name="Durbin R.M."/>
            <person name="Sulston J.E."/>
            <person name="Hubbard T."/>
            <person name="Jackson M.J."/>
            <person name="Bentley D.R."/>
            <person name="Beck S."/>
            <person name="Rogers J."/>
            <person name="Dunham I."/>
        </authorList>
    </citation>
    <scope>NUCLEOTIDE SEQUENCE [LARGE SCALE GENOMIC DNA]</scope>
</reference>
<reference key="3">
    <citation type="submission" date="2005-09" db="EMBL/GenBank/DDBJ databases">
        <authorList>
            <person name="Mural R.J."/>
            <person name="Istrail S."/>
            <person name="Sutton G.G."/>
            <person name="Florea L."/>
            <person name="Halpern A.L."/>
            <person name="Mobarry C.M."/>
            <person name="Lippert R."/>
            <person name="Walenz B."/>
            <person name="Shatkay H."/>
            <person name="Dew I."/>
            <person name="Miller J.R."/>
            <person name="Flanigan M.J."/>
            <person name="Edwards N.J."/>
            <person name="Bolanos R."/>
            <person name="Fasulo D."/>
            <person name="Halldorsson B.V."/>
            <person name="Hannenhalli S."/>
            <person name="Turner R."/>
            <person name="Yooseph S."/>
            <person name="Lu F."/>
            <person name="Nusskern D.R."/>
            <person name="Shue B.C."/>
            <person name="Zheng X.H."/>
            <person name="Zhong F."/>
            <person name="Delcher A.L."/>
            <person name="Huson D.H."/>
            <person name="Kravitz S.A."/>
            <person name="Mouchard L."/>
            <person name="Reinert K."/>
            <person name="Remington K.A."/>
            <person name="Clark A.G."/>
            <person name="Waterman M.S."/>
            <person name="Eichler E.E."/>
            <person name="Adams M.D."/>
            <person name="Hunkapiller M.W."/>
            <person name="Myers E.W."/>
            <person name="Venter J.C."/>
        </authorList>
    </citation>
    <scope>NUCLEOTIDE SEQUENCE [LARGE SCALE GENOMIC DNA]</scope>
</reference>
<reference key="4">
    <citation type="journal article" date="2004" name="Genome Res.">
        <title>The status, quality, and expansion of the NIH full-length cDNA project: the Mammalian Gene Collection (MGC).</title>
        <authorList>
            <consortium name="The MGC Project Team"/>
        </authorList>
    </citation>
    <scope>NUCLEOTIDE SEQUENCE [LARGE SCALE MRNA] (ISOFORM 1)</scope>
    <source>
        <tissue>Lung</tissue>
    </source>
</reference>
<reference key="5">
    <citation type="journal article" date="2007" name="BMC Genomics">
        <title>The full-ORF clone resource of the German cDNA consortium.</title>
        <authorList>
            <person name="Bechtel S."/>
            <person name="Rosenfelder H."/>
            <person name="Duda A."/>
            <person name="Schmidt C.P."/>
            <person name="Ernst U."/>
            <person name="Wellenreuther R."/>
            <person name="Mehrle A."/>
            <person name="Schuster C."/>
            <person name="Bahr A."/>
            <person name="Bloecker H."/>
            <person name="Heubner D."/>
            <person name="Hoerlein A."/>
            <person name="Michel G."/>
            <person name="Wedler H."/>
            <person name="Koehrer K."/>
            <person name="Ottenwaelder B."/>
            <person name="Poustka A."/>
            <person name="Wiemann S."/>
            <person name="Schupp I."/>
        </authorList>
    </citation>
    <scope>NUCLEOTIDE SEQUENCE [LARGE SCALE MRNA] OF 42-115 (ISOFORM 2)</scope>
    <source>
        <tissue>Testis</tissue>
    </source>
</reference>
<reference key="6">
    <citation type="journal article" date="2016" name="Nature">
        <title>Accessory subunits are integral for assembly and function of human mitochondrial complex I.</title>
        <authorList>
            <person name="Stroud D.A."/>
            <person name="Surgenor E.E."/>
            <person name="Formosa L.E."/>
            <person name="Reljic B."/>
            <person name="Frazier A.E."/>
            <person name="Dibley M.G."/>
            <person name="Osellame L.D."/>
            <person name="Stait T."/>
            <person name="Beilharz T.H."/>
            <person name="Thorburn D.R."/>
            <person name="Salim A."/>
            <person name="Ryan M.T."/>
        </authorList>
    </citation>
    <scope>FUNCTION</scope>
    <scope>SUBUNIT</scope>
    <scope>SUBCELLULAR LOCATION</scope>
</reference>
<protein>
    <recommendedName>
        <fullName evidence="6">Distal membrane-arm assembly complex protein 1</fullName>
    </recommendedName>
    <alternativeName>
        <fullName evidence="7">Transmembrane protein 261</fullName>
    </alternativeName>
</protein>
<accession>Q96GE9</accession>
<accession>A8K9B7</accession>
<accession>Q5T6Y9</accession>
<accession>Q9NT74</accession>
<gene>
    <name evidence="6 8" type="primary">DMAC1</name>
    <name evidence="8" type="synonym">C9orf123</name>
    <name evidence="8" type="synonym">TMEM261</name>
</gene>
<evidence type="ECO:0000255" key="1"/>
<evidence type="ECO:0000256" key="2">
    <source>
        <dbReference type="SAM" id="MobiDB-lite"/>
    </source>
</evidence>
<evidence type="ECO:0000269" key="3">
    <source>
    </source>
</evidence>
<evidence type="ECO:0000303" key="4">
    <source>
    </source>
</evidence>
<evidence type="ECO:0000303" key="5">
    <source>
    </source>
</evidence>
<evidence type="ECO:0000303" key="6">
    <source>
    </source>
</evidence>
<evidence type="ECO:0000305" key="7"/>
<evidence type="ECO:0000312" key="8">
    <source>
        <dbReference type="HGNC" id="HGNC:30536"/>
    </source>
</evidence>
<dbReference type="EMBL" id="AK292632">
    <property type="protein sequence ID" value="BAF85321.1"/>
    <property type="molecule type" value="mRNA"/>
</dbReference>
<dbReference type="EMBL" id="AL354694">
    <property type="status" value="NOT_ANNOTATED_CDS"/>
    <property type="molecule type" value="Genomic_DNA"/>
</dbReference>
<dbReference type="EMBL" id="CH471071">
    <property type="protein sequence ID" value="EAW58728.1"/>
    <property type="molecule type" value="Genomic_DNA"/>
</dbReference>
<dbReference type="EMBL" id="BC009510">
    <property type="protein sequence ID" value="AAH09510.1"/>
    <property type="molecule type" value="mRNA"/>
</dbReference>
<dbReference type="EMBL" id="AL137489">
    <property type="protein sequence ID" value="CAB70768.3"/>
    <property type="molecule type" value="mRNA"/>
</dbReference>
<dbReference type="CCDS" id="CCDS34989.1">
    <molecule id="Q96GE9-2"/>
</dbReference>
<dbReference type="PIR" id="T46473">
    <property type="entry name" value="T46473"/>
</dbReference>
<dbReference type="RefSeq" id="NP_001304987.1">
    <molecule id="Q96GE9-1"/>
    <property type="nucleotide sequence ID" value="NM_001318058.2"/>
</dbReference>
<dbReference type="RefSeq" id="NP_001304988.1">
    <property type="nucleotide sequence ID" value="NM_001318059.1"/>
</dbReference>
<dbReference type="RefSeq" id="NP_219500.1">
    <molecule id="Q96GE9-2"/>
    <property type="nucleotide sequence ID" value="NM_033428.3"/>
</dbReference>
<dbReference type="BioGRID" id="124777">
    <property type="interactions" value="24"/>
</dbReference>
<dbReference type="FunCoup" id="Q96GE9">
    <property type="interactions" value="23"/>
</dbReference>
<dbReference type="IntAct" id="Q96GE9">
    <property type="interactions" value="3"/>
</dbReference>
<dbReference type="STRING" id="9606.ENSP00000350961"/>
<dbReference type="GlyGen" id="Q96GE9">
    <property type="glycosylation" value="2 sites, 1 O-linked glycan (1 site)"/>
</dbReference>
<dbReference type="iPTMnet" id="Q96GE9"/>
<dbReference type="PhosphoSitePlus" id="Q96GE9"/>
<dbReference type="SwissPalm" id="Q96GE9"/>
<dbReference type="BioMuta" id="DMAC1"/>
<dbReference type="jPOST" id="Q96GE9"/>
<dbReference type="MassIVE" id="Q96GE9"/>
<dbReference type="PaxDb" id="9606-ENSP00000350961"/>
<dbReference type="PeptideAtlas" id="Q96GE9"/>
<dbReference type="ProteomicsDB" id="76630">
    <molecule id="Q96GE9-1"/>
</dbReference>
<dbReference type="ProteomicsDB" id="76631">
    <molecule id="Q96GE9-2"/>
</dbReference>
<dbReference type="Pumba" id="Q96GE9"/>
<dbReference type="Antibodypedia" id="3009">
    <property type="antibodies" value="19 antibodies from 10 providers"/>
</dbReference>
<dbReference type="DNASU" id="90871"/>
<dbReference type="Ensembl" id="ENST00000358227.5">
    <molecule id="Q96GE9-2"/>
    <property type="protein sequence ID" value="ENSP00000350961.4"/>
    <property type="gene ID" value="ENSG00000137038.8"/>
</dbReference>
<dbReference type="GeneID" id="90871"/>
<dbReference type="KEGG" id="hsa:90871"/>
<dbReference type="MANE-Select" id="ENST00000358227.5">
    <molecule id="Q96GE9-2"/>
    <property type="protein sequence ID" value="ENSP00000350961.4"/>
    <property type="RefSeq nucleotide sequence ID" value="NM_033428.3"/>
    <property type="RefSeq protein sequence ID" value="NP_219500.1"/>
</dbReference>
<dbReference type="UCSC" id="uc003zkj.4">
    <molecule id="Q96GE9-1"/>
    <property type="organism name" value="human"/>
</dbReference>
<dbReference type="AGR" id="HGNC:30536"/>
<dbReference type="CTD" id="90871"/>
<dbReference type="DisGeNET" id="90871"/>
<dbReference type="GeneCards" id="DMAC1"/>
<dbReference type="HGNC" id="HGNC:30536">
    <property type="gene designation" value="DMAC1"/>
</dbReference>
<dbReference type="HPA" id="ENSG00000137038">
    <property type="expression patterns" value="Low tissue specificity"/>
</dbReference>
<dbReference type="MalaCards" id="DMAC1"/>
<dbReference type="neXtProt" id="NX_Q96GE9"/>
<dbReference type="OpenTargets" id="ENSG00000137038"/>
<dbReference type="PharmGKB" id="PA134876562"/>
<dbReference type="VEuPathDB" id="HostDB:ENSG00000137038"/>
<dbReference type="eggNOG" id="ENOG502S9M0">
    <property type="taxonomic scope" value="Eukaryota"/>
</dbReference>
<dbReference type="GeneTree" id="ENSGT00390000003343"/>
<dbReference type="HOGENOM" id="CLU_171933_0_0_1"/>
<dbReference type="InParanoid" id="Q96GE9"/>
<dbReference type="OMA" id="FKNCWSC"/>
<dbReference type="OrthoDB" id="6340866at2759"/>
<dbReference type="PAN-GO" id="Q96GE9">
    <property type="GO annotations" value="0 GO annotations based on evolutionary models"/>
</dbReference>
<dbReference type="PhylomeDB" id="Q96GE9"/>
<dbReference type="TreeFam" id="TF330733"/>
<dbReference type="PathwayCommons" id="Q96GE9"/>
<dbReference type="Reactome" id="R-HSA-6799198">
    <property type="pathway name" value="Complex I biogenesis"/>
</dbReference>
<dbReference type="SignaLink" id="Q96GE9"/>
<dbReference type="BioGRID-ORCS" id="90871">
    <property type="hits" value="111 hits in 1129 CRISPR screens"/>
</dbReference>
<dbReference type="GenomeRNAi" id="90871"/>
<dbReference type="Pharos" id="Q96GE9">
    <property type="development level" value="Tbio"/>
</dbReference>
<dbReference type="PRO" id="PR:Q96GE9"/>
<dbReference type="Proteomes" id="UP000005640">
    <property type="component" value="Chromosome 9"/>
</dbReference>
<dbReference type="RNAct" id="Q96GE9">
    <property type="molecule type" value="protein"/>
</dbReference>
<dbReference type="Bgee" id="ENSG00000137038">
    <property type="expression patterns" value="Expressed in left ventricle myocardium and 188 other cell types or tissues"/>
</dbReference>
<dbReference type="GO" id="GO:0005743">
    <property type="term" value="C:mitochondrial inner membrane"/>
    <property type="evidence" value="ECO:0000314"/>
    <property type="project" value="UniProtKB"/>
</dbReference>
<dbReference type="GO" id="GO:0005739">
    <property type="term" value="C:mitochondrion"/>
    <property type="evidence" value="ECO:0006056"/>
    <property type="project" value="FlyBase"/>
</dbReference>
<dbReference type="GO" id="GO:0032981">
    <property type="term" value="P:mitochondrial respiratory chain complex I assembly"/>
    <property type="evidence" value="ECO:0000315"/>
    <property type="project" value="UniProtKB"/>
</dbReference>
<dbReference type="InterPro" id="IPR028036">
    <property type="entry name" value="DMAC1-like_dom"/>
</dbReference>
<dbReference type="InterPro" id="IPR053117">
    <property type="entry name" value="DMAC_Protein"/>
</dbReference>
<dbReference type="PANTHER" id="PTHR36469">
    <property type="entry name" value="DISTAL MEMBRANE-ARM ASSEMBLY COMPLEX PROTEIN 1"/>
    <property type="match status" value="1"/>
</dbReference>
<dbReference type="PANTHER" id="PTHR36469:SF1">
    <property type="entry name" value="DISTAL MEMBRANE-ARM ASSEMBLY COMPLEX PROTEIN 1"/>
    <property type="match status" value="1"/>
</dbReference>
<dbReference type="Pfam" id="PF15055">
    <property type="entry name" value="DUF4536"/>
    <property type="match status" value="1"/>
</dbReference>
<comment type="function">
    <text evidence="3">Required for the assembly of the mitochondrial NADH:ubiquinone oxidoreductase complex (complex I). Involved in the assembly of the distal region of complex I.</text>
</comment>
<comment type="subunit">
    <text evidence="3">Interacts with incompletely assembled mitochondrial NADH:ubiquinone oxidoreductase complex (complex I).</text>
</comment>
<comment type="subcellular location">
    <subcellularLocation>
        <location evidence="3">Mitochondrion inner membrane</location>
        <topology evidence="7">Multi-pass membrane protein</topology>
    </subcellularLocation>
</comment>
<comment type="alternative products">
    <event type="alternative splicing"/>
    <isoform>
        <id>Q96GE9-1</id>
        <name>1</name>
        <sequence type="displayed"/>
    </isoform>
    <isoform>
        <id>Q96GE9-2</id>
        <name>2</name>
        <sequence type="described" ref="VSP_014455"/>
    </isoform>
</comment>